<accession>Q8H2C8</accession>
<keyword id="KW-0009">Actin-binding</keyword>
<keyword id="KW-0020">Allergen</keyword>
<keyword id="KW-0963">Cytoplasm</keyword>
<keyword id="KW-0206">Cytoskeleton</keyword>
<feature type="initiator methionine" description="Removed" evidence="1">
    <location>
        <position position="1"/>
    </location>
</feature>
<feature type="chain" id="PRO_0000199621" description="Profilin-2">
    <location>
        <begin position="2"/>
        <end position="133"/>
    </location>
</feature>
<reference key="1">
    <citation type="journal article" date="2002" name="Biol. Chem.">
        <title>Molecular and immunological characterization of profilin from mugwort pollen.</title>
        <authorList>
            <person name="Wopfner N."/>
            <person name="Willeroidee M."/>
            <person name="Hebenstreit D."/>
            <person name="van Ree R."/>
            <person name="Aalbers M."/>
            <person name="Briza P."/>
            <person name="Thalhamer J."/>
            <person name="Ebner C."/>
            <person name="Richter K."/>
            <person name="Ferreira F."/>
        </authorList>
    </citation>
    <scope>NUCLEOTIDE SEQUENCE [MRNA]</scope>
    <source>
        <tissue>Pollen</tissue>
    </source>
</reference>
<name>PROF2_ARTVU</name>
<comment type="function">
    <text evidence="1">Binds to actin and affects the structure of the cytoskeleton. At high concentrations, profilin prevents the polymerization of actin, whereas it enhances it at low concentrations. By binding to PIP2, it inhibits the formation of IP3 and DG (By similarity).</text>
</comment>
<comment type="subunit">
    <text>Occurs in many kinds of cells as a complex with monomeric actin in a 1:1 ratio.</text>
</comment>
<comment type="subcellular location">
    <subcellularLocation>
        <location evidence="1">Cytoplasm</location>
        <location evidence="1">Cytoskeleton</location>
    </subcellularLocation>
</comment>
<comment type="allergen">
    <text>Causes an allergic reaction in human.</text>
</comment>
<comment type="similarity">
    <text evidence="2">Belongs to the profilin family.</text>
</comment>
<proteinExistence type="evidence at protein level"/>
<protein>
    <recommendedName>
        <fullName>Profilin-2</fullName>
    </recommendedName>
    <alternativeName>
        <fullName>Pollen allergen Art v 4.02</fullName>
    </alternativeName>
    <allergenName>Art v 4.02</allergenName>
</protein>
<dbReference type="EMBL" id="AJ421031">
    <property type="protein sequence ID" value="CAD12862.1"/>
    <property type="molecule type" value="mRNA"/>
</dbReference>
<dbReference type="SMR" id="Q8H2C8"/>
<dbReference type="Allergome" id="1653">
    <property type="allergen name" value="Art v 4.0201"/>
</dbReference>
<dbReference type="Allergome" id="60">
    <property type="allergen name" value="Art v 4"/>
</dbReference>
<dbReference type="GO" id="GO:0005938">
    <property type="term" value="C:cell cortex"/>
    <property type="evidence" value="ECO:0007669"/>
    <property type="project" value="TreeGrafter"/>
</dbReference>
<dbReference type="GO" id="GO:0005856">
    <property type="term" value="C:cytoskeleton"/>
    <property type="evidence" value="ECO:0007669"/>
    <property type="project" value="UniProtKB-SubCell"/>
</dbReference>
<dbReference type="GO" id="GO:0003785">
    <property type="term" value="F:actin monomer binding"/>
    <property type="evidence" value="ECO:0007669"/>
    <property type="project" value="TreeGrafter"/>
</dbReference>
<dbReference type="CDD" id="cd00148">
    <property type="entry name" value="PROF"/>
    <property type="match status" value="1"/>
</dbReference>
<dbReference type="FunFam" id="3.30.450.30:FF:000001">
    <property type="entry name" value="Profilin"/>
    <property type="match status" value="1"/>
</dbReference>
<dbReference type="Gene3D" id="3.30.450.30">
    <property type="entry name" value="Dynein light chain 2a, cytoplasmic"/>
    <property type="match status" value="1"/>
</dbReference>
<dbReference type="InterPro" id="IPR048278">
    <property type="entry name" value="PFN"/>
</dbReference>
<dbReference type="InterPro" id="IPR005455">
    <property type="entry name" value="PFN_euk"/>
</dbReference>
<dbReference type="InterPro" id="IPR036140">
    <property type="entry name" value="PFN_sf"/>
</dbReference>
<dbReference type="InterPro" id="IPR027310">
    <property type="entry name" value="Profilin_CS"/>
</dbReference>
<dbReference type="PANTHER" id="PTHR11604">
    <property type="entry name" value="PROFILIN"/>
    <property type="match status" value="1"/>
</dbReference>
<dbReference type="PANTHER" id="PTHR11604:SF54">
    <property type="entry name" value="PROFILIN"/>
    <property type="match status" value="1"/>
</dbReference>
<dbReference type="Pfam" id="PF00235">
    <property type="entry name" value="Profilin"/>
    <property type="match status" value="1"/>
</dbReference>
<dbReference type="PRINTS" id="PR00392">
    <property type="entry name" value="PROFILIN"/>
</dbReference>
<dbReference type="PRINTS" id="PR01640">
    <property type="entry name" value="PROFILINPLNT"/>
</dbReference>
<dbReference type="SMART" id="SM00392">
    <property type="entry name" value="PROF"/>
    <property type="match status" value="1"/>
</dbReference>
<dbReference type="SUPFAM" id="SSF55770">
    <property type="entry name" value="Profilin (actin-binding protein)"/>
    <property type="match status" value="1"/>
</dbReference>
<dbReference type="PROSITE" id="PS00414">
    <property type="entry name" value="PROFILIN"/>
    <property type="match status" value="1"/>
</dbReference>
<sequence>MSWQTYVDDHLMCDIEGTGQHLTAAAILGLDGTVWAKSDKFPEFKPEEMKGIINEFNEVGTLAPTGLFLGGAKYMVLQGEAGAVIRGKKGAGGICIKKTGQAMVMGIYDEPVAPGQCNMIVERLGDYLVDQNM</sequence>
<organism>
    <name type="scientific">Artemisia vulgaris</name>
    <name type="common">Mugwort</name>
    <dbReference type="NCBI Taxonomy" id="4220"/>
    <lineage>
        <taxon>Eukaryota</taxon>
        <taxon>Viridiplantae</taxon>
        <taxon>Streptophyta</taxon>
        <taxon>Embryophyta</taxon>
        <taxon>Tracheophyta</taxon>
        <taxon>Spermatophyta</taxon>
        <taxon>Magnoliopsida</taxon>
        <taxon>eudicotyledons</taxon>
        <taxon>Gunneridae</taxon>
        <taxon>Pentapetalae</taxon>
        <taxon>asterids</taxon>
        <taxon>campanulids</taxon>
        <taxon>Asterales</taxon>
        <taxon>Asteraceae</taxon>
        <taxon>Asteroideae</taxon>
        <taxon>Anthemideae</taxon>
        <taxon>Artemisiinae</taxon>
        <taxon>Artemisia</taxon>
    </lineage>
</organism>
<evidence type="ECO:0000250" key="1"/>
<evidence type="ECO:0000305" key="2"/>